<protein>
    <recommendedName>
        <fullName evidence="1">Large ribosomal subunit protein bL20</fullName>
    </recommendedName>
    <alternativeName>
        <fullName evidence="2">50S ribosomal protein L20</fullName>
    </alternativeName>
</protein>
<comment type="function">
    <text evidence="1">Binds directly to 23S ribosomal RNA and is necessary for the in vitro assembly process of the 50S ribosomal subunit. It is not involved in the protein synthesizing functions of that subunit.</text>
</comment>
<comment type="similarity">
    <text evidence="1">Belongs to the bacterial ribosomal protein bL20 family.</text>
</comment>
<sequence>MPRSVNHVASRAKRKRILKLTRGYYGARKNVWTVAKNTWEKGLTYAFRDRRNKKRNFRALWIQRINAAARMEGLSYSRLMGALHAAGIEINRKVLADLAVNHPEAFKAIVAKVK</sequence>
<gene>
    <name evidence="1" type="primary">rplT</name>
    <name type="ordered locus">BDI_0663</name>
</gene>
<proteinExistence type="inferred from homology"/>
<organism>
    <name type="scientific">Parabacteroides distasonis (strain ATCC 8503 / DSM 20701 / CIP 104284 / JCM 5825 / NCTC 11152)</name>
    <dbReference type="NCBI Taxonomy" id="435591"/>
    <lineage>
        <taxon>Bacteria</taxon>
        <taxon>Pseudomonadati</taxon>
        <taxon>Bacteroidota</taxon>
        <taxon>Bacteroidia</taxon>
        <taxon>Bacteroidales</taxon>
        <taxon>Tannerellaceae</taxon>
        <taxon>Parabacteroides</taxon>
    </lineage>
</organism>
<name>RL20_PARD8</name>
<dbReference type="EMBL" id="CP000140">
    <property type="protein sequence ID" value="ABR42439.1"/>
    <property type="molecule type" value="Genomic_DNA"/>
</dbReference>
<dbReference type="RefSeq" id="WP_005857682.1">
    <property type="nucleotide sequence ID" value="NZ_LR215978.1"/>
</dbReference>
<dbReference type="SMR" id="A6L9S5"/>
<dbReference type="STRING" id="435591.BDI_0663"/>
<dbReference type="PaxDb" id="435591-BDI_0663"/>
<dbReference type="DNASU" id="5305818"/>
<dbReference type="GeneID" id="93521661"/>
<dbReference type="KEGG" id="pdi:BDI_0663"/>
<dbReference type="eggNOG" id="COG0292">
    <property type="taxonomic scope" value="Bacteria"/>
</dbReference>
<dbReference type="HOGENOM" id="CLU_123265_0_1_10"/>
<dbReference type="BioCyc" id="PDIS435591:G1G5A-680-MONOMER"/>
<dbReference type="Proteomes" id="UP000000566">
    <property type="component" value="Chromosome"/>
</dbReference>
<dbReference type="GO" id="GO:1990904">
    <property type="term" value="C:ribonucleoprotein complex"/>
    <property type="evidence" value="ECO:0007669"/>
    <property type="project" value="UniProtKB-KW"/>
</dbReference>
<dbReference type="GO" id="GO:0005840">
    <property type="term" value="C:ribosome"/>
    <property type="evidence" value="ECO:0007669"/>
    <property type="project" value="UniProtKB-KW"/>
</dbReference>
<dbReference type="GO" id="GO:0019843">
    <property type="term" value="F:rRNA binding"/>
    <property type="evidence" value="ECO:0007669"/>
    <property type="project" value="UniProtKB-UniRule"/>
</dbReference>
<dbReference type="GO" id="GO:0003735">
    <property type="term" value="F:structural constituent of ribosome"/>
    <property type="evidence" value="ECO:0007669"/>
    <property type="project" value="InterPro"/>
</dbReference>
<dbReference type="GO" id="GO:0000027">
    <property type="term" value="P:ribosomal large subunit assembly"/>
    <property type="evidence" value="ECO:0007669"/>
    <property type="project" value="UniProtKB-UniRule"/>
</dbReference>
<dbReference type="GO" id="GO:0006412">
    <property type="term" value="P:translation"/>
    <property type="evidence" value="ECO:0007669"/>
    <property type="project" value="InterPro"/>
</dbReference>
<dbReference type="CDD" id="cd07026">
    <property type="entry name" value="Ribosomal_L20"/>
    <property type="match status" value="1"/>
</dbReference>
<dbReference type="FunFam" id="1.10.1900.20:FF:000001">
    <property type="entry name" value="50S ribosomal protein L20"/>
    <property type="match status" value="1"/>
</dbReference>
<dbReference type="Gene3D" id="6.10.160.10">
    <property type="match status" value="1"/>
</dbReference>
<dbReference type="Gene3D" id="1.10.1900.20">
    <property type="entry name" value="Ribosomal protein L20"/>
    <property type="match status" value="1"/>
</dbReference>
<dbReference type="HAMAP" id="MF_00382">
    <property type="entry name" value="Ribosomal_bL20"/>
    <property type="match status" value="1"/>
</dbReference>
<dbReference type="InterPro" id="IPR005813">
    <property type="entry name" value="Ribosomal_bL20"/>
</dbReference>
<dbReference type="InterPro" id="IPR049946">
    <property type="entry name" value="RIBOSOMAL_L20_CS"/>
</dbReference>
<dbReference type="InterPro" id="IPR035566">
    <property type="entry name" value="Ribosomal_protein_bL20_C"/>
</dbReference>
<dbReference type="NCBIfam" id="TIGR01032">
    <property type="entry name" value="rplT_bact"/>
    <property type="match status" value="1"/>
</dbReference>
<dbReference type="PANTHER" id="PTHR10986">
    <property type="entry name" value="39S RIBOSOMAL PROTEIN L20"/>
    <property type="match status" value="1"/>
</dbReference>
<dbReference type="Pfam" id="PF00453">
    <property type="entry name" value="Ribosomal_L20"/>
    <property type="match status" value="1"/>
</dbReference>
<dbReference type="PRINTS" id="PR00062">
    <property type="entry name" value="RIBOSOMALL20"/>
</dbReference>
<dbReference type="SUPFAM" id="SSF74731">
    <property type="entry name" value="Ribosomal protein L20"/>
    <property type="match status" value="1"/>
</dbReference>
<dbReference type="PROSITE" id="PS00937">
    <property type="entry name" value="RIBOSOMAL_L20"/>
    <property type="match status" value="1"/>
</dbReference>
<evidence type="ECO:0000255" key="1">
    <source>
        <dbReference type="HAMAP-Rule" id="MF_00382"/>
    </source>
</evidence>
<evidence type="ECO:0000305" key="2"/>
<keyword id="KW-1185">Reference proteome</keyword>
<keyword id="KW-0687">Ribonucleoprotein</keyword>
<keyword id="KW-0689">Ribosomal protein</keyword>
<keyword id="KW-0694">RNA-binding</keyword>
<keyword id="KW-0699">rRNA-binding</keyword>
<accession>A6L9S5</accession>
<reference key="1">
    <citation type="journal article" date="2007" name="PLoS Biol.">
        <title>Evolution of symbiotic bacteria in the distal human intestine.</title>
        <authorList>
            <person name="Xu J."/>
            <person name="Mahowald M.A."/>
            <person name="Ley R.E."/>
            <person name="Lozupone C.A."/>
            <person name="Hamady M."/>
            <person name="Martens E.C."/>
            <person name="Henrissat B."/>
            <person name="Coutinho P.M."/>
            <person name="Minx P."/>
            <person name="Latreille P."/>
            <person name="Cordum H."/>
            <person name="Van Brunt A."/>
            <person name="Kim K."/>
            <person name="Fulton R.S."/>
            <person name="Fulton L.A."/>
            <person name="Clifton S.W."/>
            <person name="Wilson R.K."/>
            <person name="Knight R.D."/>
            <person name="Gordon J.I."/>
        </authorList>
    </citation>
    <scope>NUCLEOTIDE SEQUENCE [LARGE SCALE GENOMIC DNA]</scope>
    <source>
        <strain>ATCC 8503 / DSM 20701 / CIP 104284 / JCM 5825 / NCTC 11152</strain>
    </source>
</reference>
<feature type="chain" id="PRO_1000049026" description="Large ribosomal subunit protein bL20">
    <location>
        <begin position="1"/>
        <end position="114"/>
    </location>
</feature>